<proteinExistence type="inferred from homology"/>
<sequence>MSNHAVANRYAVALFELAQEKGLHESFVSELELIKAVFQDTPELMQFLTHPKTELTQKRELLEKTFKGKVNDTIFNTLVVLVERKRIDLIIPVVQKFKSLSYDAQKIAEAFVYSAKPLSEAEKDQLSVLFAKKVGKAKLLIENIVDPSIIGGLKIRIGDRIYDGSIKGQLDVLHRELVSGPRS</sequence>
<reference key="1">
    <citation type="journal article" date="2000" name="Nucleic Acids Res.">
        <title>Complete genome sequence of the alkaliphilic bacterium Bacillus halodurans and genomic sequence comparison with Bacillus subtilis.</title>
        <authorList>
            <person name="Takami H."/>
            <person name="Nakasone K."/>
            <person name="Takaki Y."/>
            <person name="Maeno G."/>
            <person name="Sasaki R."/>
            <person name="Masui N."/>
            <person name="Fuji F."/>
            <person name="Hirama C."/>
            <person name="Nakamura Y."/>
            <person name="Ogasawara N."/>
            <person name="Kuhara S."/>
            <person name="Horikoshi K."/>
        </authorList>
    </citation>
    <scope>NUCLEOTIDE SEQUENCE [LARGE SCALE GENOMIC DNA]</scope>
    <source>
        <strain>ATCC BAA-125 / DSM 18197 / FERM 7344 / JCM 9153 / C-125</strain>
    </source>
</reference>
<organism>
    <name type="scientific">Halalkalibacterium halodurans (strain ATCC BAA-125 / DSM 18197 / FERM 7344 / JCM 9153 / C-125)</name>
    <name type="common">Bacillus halodurans</name>
    <dbReference type="NCBI Taxonomy" id="272558"/>
    <lineage>
        <taxon>Bacteria</taxon>
        <taxon>Bacillati</taxon>
        <taxon>Bacillota</taxon>
        <taxon>Bacilli</taxon>
        <taxon>Bacillales</taxon>
        <taxon>Bacillaceae</taxon>
        <taxon>Halalkalibacterium (ex Joshi et al. 2022)</taxon>
    </lineage>
</organism>
<comment type="function">
    <text evidence="1">F(1)F(0) ATP synthase produces ATP from ADP in the presence of a proton or sodium gradient. F-type ATPases consist of two structural domains, F(1) containing the extramembraneous catalytic core and F(0) containing the membrane proton channel, linked together by a central stalk and a peripheral stalk. During catalysis, ATP synthesis in the catalytic domain of F(1) is coupled via a rotary mechanism of the central stalk subunits to proton translocation.</text>
</comment>
<comment type="function">
    <text evidence="1">This protein is part of the stalk that links CF(0) to CF(1). It either transmits conformational changes from CF(0) to CF(1) or is implicated in proton conduction.</text>
</comment>
<comment type="subunit">
    <text evidence="1">F-type ATPases have 2 components, F(1) - the catalytic core - and F(0) - the membrane proton channel. F(1) has five subunits: alpha(3), beta(3), gamma(1), delta(1), epsilon(1). F(0) has three main subunits: a(1), b(2) and c(10-14). The alpha and beta chains form an alternating ring which encloses part of the gamma chain. F(1) is attached to F(0) by a central stalk formed by the gamma and epsilon chains, while a peripheral stalk is formed by the delta and b chains.</text>
</comment>
<comment type="subcellular location">
    <subcellularLocation>
        <location evidence="1">Cell membrane</location>
        <topology evidence="1">Peripheral membrane protein</topology>
    </subcellularLocation>
</comment>
<comment type="similarity">
    <text evidence="1">Belongs to the ATPase delta chain family.</text>
</comment>
<accession>Q9K6H2</accession>
<feature type="chain" id="PRO_0000193454" description="ATP synthase subunit delta">
    <location>
        <begin position="1"/>
        <end position="183"/>
    </location>
</feature>
<protein>
    <recommendedName>
        <fullName evidence="1">ATP synthase subunit delta</fullName>
    </recommendedName>
    <alternativeName>
        <fullName evidence="1">ATP synthase F(1) sector subunit delta</fullName>
    </alternativeName>
    <alternativeName>
        <fullName evidence="1">F-type ATPase subunit delta</fullName>
        <shortName evidence="1">F-ATPase subunit delta</shortName>
    </alternativeName>
</protein>
<name>ATPD_HALH5</name>
<keyword id="KW-0066">ATP synthesis</keyword>
<keyword id="KW-1003">Cell membrane</keyword>
<keyword id="KW-0139">CF(1)</keyword>
<keyword id="KW-0375">Hydrogen ion transport</keyword>
<keyword id="KW-0406">Ion transport</keyword>
<keyword id="KW-0472">Membrane</keyword>
<keyword id="KW-1185">Reference proteome</keyword>
<keyword id="KW-0813">Transport</keyword>
<dbReference type="EMBL" id="BA000004">
    <property type="protein sequence ID" value="BAB07476.1"/>
    <property type="molecule type" value="Genomic_DNA"/>
</dbReference>
<dbReference type="PIR" id="E84119">
    <property type="entry name" value="E84119"/>
</dbReference>
<dbReference type="RefSeq" id="WP_010899882.1">
    <property type="nucleotide sequence ID" value="NC_002570.2"/>
</dbReference>
<dbReference type="SMR" id="Q9K6H2"/>
<dbReference type="STRING" id="272558.gene:10729670"/>
<dbReference type="KEGG" id="bha:BH3757"/>
<dbReference type="eggNOG" id="COG0712">
    <property type="taxonomic scope" value="Bacteria"/>
</dbReference>
<dbReference type="HOGENOM" id="CLU_085114_4_1_9"/>
<dbReference type="OrthoDB" id="9802471at2"/>
<dbReference type="Proteomes" id="UP000001258">
    <property type="component" value="Chromosome"/>
</dbReference>
<dbReference type="GO" id="GO:0005886">
    <property type="term" value="C:plasma membrane"/>
    <property type="evidence" value="ECO:0007669"/>
    <property type="project" value="UniProtKB-SubCell"/>
</dbReference>
<dbReference type="GO" id="GO:0045259">
    <property type="term" value="C:proton-transporting ATP synthase complex"/>
    <property type="evidence" value="ECO:0007669"/>
    <property type="project" value="UniProtKB-KW"/>
</dbReference>
<dbReference type="GO" id="GO:0046933">
    <property type="term" value="F:proton-transporting ATP synthase activity, rotational mechanism"/>
    <property type="evidence" value="ECO:0007669"/>
    <property type="project" value="UniProtKB-UniRule"/>
</dbReference>
<dbReference type="Gene3D" id="1.10.520.20">
    <property type="entry name" value="N-terminal domain of the delta subunit of the F1F0-ATP synthase"/>
    <property type="match status" value="1"/>
</dbReference>
<dbReference type="HAMAP" id="MF_01416">
    <property type="entry name" value="ATP_synth_delta_bact"/>
    <property type="match status" value="1"/>
</dbReference>
<dbReference type="InterPro" id="IPR026015">
    <property type="entry name" value="ATP_synth_OSCP/delta_N_sf"/>
</dbReference>
<dbReference type="InterPro" id="IPR020781">
    <property type="entry name" value="ATPase_OSCP/d_CS"/>
</dbReference>
<dbReference type="InterPro" id="IPR000711">
    <property type="entry name" value="ATPase_OSCP/dsu"/>
</dbReference>
<dbReference type="NCBIfam" id="TIGR01145">
    <property type="entry name" value="ATP_synt_delta"/>
    <property type="match status" value="1"/>
</dbReference>
<dbReference type="NCBIfam" id="NF004403">
    <property type="entry name" value="PRK05758.2-4"/>
    <property type="match status" value="1"/>
</dbReference>
<dbReference type="PANTHER" id="PTHR11910">
    <property type="entry name" value="ATP SYNTHASE DELTA CHAIN"/>
    <property type="match status" value="1"/>
</dbReference>
<dbReference type="Pfam" id="PF00213">
    <property type="entry name" value="OSCP"/>
    <property type="match status" value="1"/>
</dbReference>
<dbReference type="PRINTS" id="PR00125">
    <property type="entry name" value="ATPASEDELTA"/>
</dbReference>
<dbReference type="SUPFAM" id="SSF47928">
    <property type="entry name" value="N-terminal domain of the delta subunit of the F1F0-ATP synthase"/>
    <property type="match status" value="1"/>
</dbReference>
<dbReference type="PROSITE" id="PS00389">
    <property type="entry name" value="ATPASE_DELTA"/>
    <property type="match status" value="1"/>
</dbReference>
<gene>
    <name evidence="1" type="primary">atpH</name>
    <name type="ordered locus">BH3757</name>
</gene>
<evidence type="ECO:0000255" key="1">
    <source>
        <dbReference type="HAMAP-Rule" id="MF_01416"/>
    </source>
</evidence>